<feature type="chain" id="PRO_1000213450" description="Putative pyruvate, phosphate dikinase regulatory protein">
    <location>
        <begin position="1"/>
        <end position="269"/>
    </location>
</feature>
<feature type="binding site" evidence="1">
    <location>
        <begin position="147"/>
        <end position="154"/>
    </location>
    <ligand>
        <name>ADP</name>
        <dbReference type="ChEBI" id="CHEBI:456216"/>
    </ligand>
</feature>
<reference key="1">
    <citation type="submission" date="2008-05" db="EMBL/GenBank/DDBJ databases">
        <title>Genome sequence of Clostridium botulinum Ba4 strain 657.</title>
        <authorList>
            <person name="Shrivastava S."/>
            <person name="Brown J.L."/>
            <person name="Bruce D."/>
            <person name="Detter C."/>
            <person name="Munk C."/>
            <person name="Smith L.A."/>
            <person name="Smith T.J."/>
            <person name="Sutton G."/>
            <person name="Brettin T.S."/>
        </authorList>
    </citation>
    <scope>NUCLEOTIDE SEQUENCE [LARGE SCALE GENOMIC DNA]</scope>
    <source>
        <strain>657 / Type Ba4</strain>
    </source>
</reference>
<dbReference type="EC" id="2.7.11.32" evidence="1"/>
<dbReference type="EC" id="2.7.4.27" evidence="1"/>
<dbReference type="EMBL" id="CP001083">
    <property type="protein sequence ID" value="ACQ53581.1"/>
    <property type="molecule type" value="Genomic_DNA"/>
</dbReference>
<dbReference type="RefSeq" id="WP_012720980.1">
    <property type="nucleotide sequence ID" value="NC_012658.1"/>
</dbReference>
<dbReference type="SMR" id="C3KWG3"/>
<dbReference type="KEGG" id="cbi:CLJ_B3950"/>
<dbReference type="HOGENOM" id="CLU_046206_2_1_9"/>
<dbReference type="Proteomes" id="UP000002333">
    <property type="component" value="Chromosome"/>
</dbReference>
<dbReference type="GO" id="GO:0043531">
    <property type="term" value="F:ADP binding"/>
    <property type="evidence" value="ECO:0007669"/>
    <property type="project" value="UniProtKB-UniRule"/>
</dbReference>
<dbReference type="GO" id="GO:0005524">
    <property type="term" value="F:ATP binding"/>
    <property type="evidence" value="ECO:0007669"/>
    <property type="project" value="InterPro"/>
</dbReference>
<dbReference type="GO" id="GO:0016776">
    <property type="term" value="F:phosphotransferase activity, phosphate group as acceptor"/>
    <property type="evidence" value="ECO:0007669"/>
    <property type="project" value="UniProtKB-UniRule"/>
</dbReference>
<dbReference type="GO" id="GO:0004674">
    <property type="term" value="F:protein serine/threonine kinase activity"/>
    <property type="evidence" value="ECO:0007669"/>
    <property type="project" value="UniProtKB-UniRule"/>
</dbReference>
<dbReference type="HAMAP" id="MF_00921">
    <property type="entry name" value="PDRP"/>
    <property type="match status" value="1"/>
</dbReference>
<dbReference type="InterPro" id="IPR005177">
    <property type="entry name" value="Kinase-pyrophosphorylase"/>
</dbReference>
<dbReference type="InterPro" id="IPR026565">
    <property type="entry name" value="PPDK_reg"/>
</dbReference>
<dbReference type="NCBIfam" id="NF003742">
    <property type="entry name" value="PRK05339.1"/>
    <property type="match status" value="1"/>
</dbReference>
<dbReference type="PANTHER" id="PTHR31756">
    <property type="entry name" value="PYRUVATE, PHOSPHATE DIKINASE REGULATORY PROTEIN 1, CHLOROPLASTIC"/>
    <property type="match status" value="1"/>
</dbReference>
<dbReference type="PANTHER" id="PTHR31756:SF3">
    <property type="entry name" value="PYRUVATE, PHOSPHATE DIKINASE REGULATORY PROTEIN 1, CHLOROPLASTIC"/>
    <property type="match status" value="1"/>
</dbReference>
<dbReference type="Pfam" id="PF03618">
    <property type="entry name" value="Kinase-PPPase"/>
    <property type="match status" value="1"/>
</dbReference>
<protein>
    <recommendedName>
        <fullName evidence="1">Putative pyruvate, phosphate dikinase regulatory protein</fullName>
        <shortName evidence="1">PPDK regulatory protein</shortName>
        <ecNumber evidence="1">2.7.11.32</ecNumber>
        <ecNumber evidence="1">2.7.4.27</ecNumber>
    </recommendedName>
</protein>
<gene>
    <name type="ordered locus">CLJ_B3950</name>
</gene>
<evidence type="ECO:0000255" key="1">
    <source>
        <dbReference type="HAMAP-Rule" id="MF_00921"/>
    </source>
</evidence>
<sequence>MFKIYAVSDSIGETAEQVANATAYQFGSSVKVERVPYVKTFEDVNNLISIIENPNEAMIISTIVLVDIREFLVQRCVESGIHISNVLGPCISLVSTILNKTPEYKPGAVWDMDKKYYKKIEAMEFAIRYDDSKDHSGIKHADIVLIGLSRTSKTPLSIYLANKGIKALNIPLMPEVPVPEELFEIDRKKIIGLTIDPMHLIEIRRHRVDNMMKIPTELKYANAERVLDELEFADKIMRKLKCKVIDVTKRAIEDTALIIMESVFSDRII</sequence>
<keyword id="KW-0418">Kinase</keyword>
<keyword id="KW-0547">Nucleotide-binding</keyword>
<keyword id="KW-0723">Serine/threonine-protein kinase</keyword>
<keyword id="KW-0808">Transferase</keyword>
<comment type="function">
    <text evidence="1">Bifunctional serine/threonine kinase and phosphorylase involved in the regulation of the pyruvate, phosphate dikinase (PPDK) by catalyzing its phosphorylation/dephosphorylation.</text>
</comment>
<comment type="catalytic activity">
    <reaction evidence="1">
        <text>N(tele)-phospho-L-histidyl/L-threonyl-[pyruvate, phosphate dikinase] + ADP = N(tele)-phospho-L-histidyl/O-phospho-L-threonyl-[pyruvate, phosphate dikinase] + AMP + H(+)</text>
        <dbReference type="Rhea" id="RHEA:43692"/>
        <dbReference type="Rhea" id="RHEA-COMP:10650"/>
        <dbReference type="Rhea" id="RHEA-COMP:10651"/>
        <dbReference type="ChEBI" id="CHEBI:15378"/>
        <dbReference type="ChEBI" id="CHEBI:30013"/>
        <dbReference type="ChEBI" id="CHEBI:61977"/>
        <dbReference type="ChEBI" id="CHEBI:83586"/>
        <dbReference type="ChEBI" id="CHEBI:456215"/>
        <dbReference type="ChEBI" id="CHEBI:456216"/>
        <dbReference type="EC" id="2.7.11.32"/>
    </reaction>
</comment>
<comment type="catalytic activity">
    <reaction evidence="1">
        <text>N(tele)-phospho-L-histidyl/O-phospho-L-threonyl-[pyruvate, phosphate dikinase] + phosphate + H(+) = N(tele)-phospho-L-histidyl/L-threonyl-[pyruvate, phosphate dikinase] + diphosphate</text>
        <dbReference type="Rhea" id="RHEA:43696"/>
        <dbReference type="Rhea" id="RHEA-COMP:10650"/>
        <dbReference type="Rhea" id="RHEA-COMP:10651"/>
        <dbReference type="ChEBI" id="CHEBI:15378"/>
        <dbReference type="ChEBI" id="CHEBI:30013"/>
        <dbReference type="ChEBI" id="CHEBI:33019"/>
        <dbReference type="ChEBI" id="CHEBI:43474"/>
        <dbReference type="ChEBI" id="CHEBI:61977"/>
        <dbReference type="ChEBI" id="CHEBI:83586"/>
        <dbReference type="EC" id="2.7.4.27"/>
    </reaction>
</comment>
<comment type="similarity">
    <text evidence="1">Belongs to the pyruvate, phosphate/water dikinase regulatory protein family. PDRP subfamily.</text>
</comment>
<name>PDRP_CLOB6</name>
<accession>C3KWG3</accession>
<organism>
    <name type="scientific">Clostridium botulinum (strain 657 / Type Ba4)</name>
    <dbReference type="NCBI Taxonomy" id="515621"/>
    <lineage>
        <taxon>Bacteria</taxon>
        <taxon>Bacillati</taxon>
        <taxon>Bacillota</taxon>
        <taxon>Clostridia</taxon>
        <taxon>Eubacteriales</taxon>
        <taxon>Clostridiaceae</taxon>
        <taxon>Clostridium</taxon>
    </lineage>
</organism>
<proteinExistence type="inferred from homology"/>